<proteinExistence type="inferred from homology"/>
<feature type="transit peptide" description="Mitochondrion" evidence="2">
    <location>
        <begin position="1"/>
        <end position="38"/>
    </location>
</feature>
<feature type="chain" id="PRO_0000338580" description="Mitochondrial intermediate peptidase">
    <location>
        <begin position="39"/>
        <end position="776"/>
    </location>
</feature>
<feature type="active site" evidence="3">
    <location>
        <position position="561"/>
    </location>
</feature>
<feature type="binding site" evidence="3">
    <location>
        <position position="560"/>
    </location>
    <ligand>
        <name>Zn(2+)</name>
        <dbReference type="ChEBI" id="CHEBI:29105"/>
        <note>catalytic</note>
    </ligand>
</feature>
<feature type="binding site" evidence="3">
    <location>
        <position position="564"/>
    </location>
    <ligand>
        <name>Zn(2+)</name>
        <dbReference type="ChEBI" id="CHEBI:29105"/>
        <note>catalytic</note>
    </ligand>
</feature>
<feature type="binding site" evidence="3">
    <location>
        <position position="567"/>
    </location>
    <ligand>
        <name>Zn(2+)</name>
        <dbReference type="ChEBI" id="CHEBI:29105"/>
        <note>catalytic</note>
    </ligand>
</feature>
<reference key="1">
    <citation type="journal article" date="2010" name="Proc. Natl. Acad. Sci. U.S.A.">
        <title>Insights into evolution of multicellular fungi from the assembled chromosomes of the mushroom Coprinopsis cinerea (Coprinus cinereus).</title>
        <authorList>
            <person name="Stajich J.E."/>
            <person name="Wilke S.K."/>
            <person name="Ahren D."/>
            <person name="Au C.H."/>
            <person name="Birren B.W."/>
            <person name="Borodovsky M."/>
            <person name="Burns C."/>
            <person name="Canbaeck B."/>
            <person name="Casselton L.A."/>
            <person name="Cheng C.K."/>
            <person name="Deng J."/>
            <person name="Dietrich F.S."/>
            <person name="Fargo D.C."/>
            <person name="Farman M.L."/>
            <person name="Gathman A.C."/>
            <person name="Goldberg J."/>
            <person name="Guigo R."/>
            <person name="Hoegger P.J."/>
            <person name="Hooker J.B."/>
            <person name="Huggins A."/>
            <person name="James T.Y."/>
            <person name="Kamada T."/>
            <person name="Kilaru S."/>
            <person name="Kodira C."/>
            <person name="Kuees U."/>
            <person name="Kupfer D."/>
            <person name="Kwan H.S."/>
            <person name="Lomsadze A."/>
            <person name="Li W."/>
            <person name="Lilly W.W."/>
            <person name="Ma L.-J."/>
            <person name="Mackey A.J."/>
            <person name="Manning G."/>
            <person name="Martin F."/>
            <person name="Muraguchi H."/>
            <person name="Natvig D.O."/>
            <person name="Palmerini H."/>
            <person name="Ramesh M.A."/>
            <person name="Rehmeyer C.J."/>
            <person name="Roe B.A."/>
            <person name="Shenoy N."/>
            <person name="Stanke M."/>
            <person name="Ter-Hovhannisyan V."/>
            <person name="Tunlid A."/>
            <person name="Velagapudi R."/>
            <person name="Vision T.J."/>
            <person name="Zeng Q."/>
            <person name="Zolan M.E."/>
            <person name="Pukkila P.J."/>
        </authorList>
    </citation>
    <scope>NUCLEOTIDE SEQUENCE [LARGE SCALE GENOMIC DNA]</scope>
    <source>
        <strain>Okayama-7 / 130 / ATCC MYA-4618 / FGSC 9003</strain>
    </source>
</reference>
<gene>
    <name type="primary">OCT1</name>
    <name type="ORF">CC1G_01835</name>
</gene>
<dbReference type="EC" id="3.4.24.59"/>
<dbReference type="EMBL" id="AACS02000001">
    <property type="protein sequence ID" value="EAU92790.2"/>
    <property type="molecule type" value="Genomic_DNA"/>
</dbReference>
<dbReference type="RefSeq" id="XP_001829155.2">
    <property type="nucleotide sequence ID" value="XM_001829103.2"/>
</dbReference>
<dbReference type="SMR" id="A8N2T3"/>
<dbReference type="FunCoup" id="A8N2T3">
    <property type="interactions" value="344"/>
</dbReference>
<dbReference type="STRING" id="240176.A8N2T3"/>
<dbReference type="GeneID" id="6005581"/>
<dbReference type="KEGG" id="cci:CC1G_01835"/>
<dbReference type="VEuPathDB" id="FungiDB:CC1G_01835"/>
<dbReference type="eggNOG" id="KOG2090">
    <property type="taxonomic scope" value="Eukaryota"/>
</dbReference>
<dbReference type="HOGENOM" id="CLU_001805_0_0_1"/>
<dbReference type="InParanoid" id="A8N2T3"/>
<dbReference type="OMA" id="ALMFEYM"/>
<dbReference type="OrthoDB" id="17530at2759"/>
<dbReference type="Proteomes" id="UP000001861">
    <property type="component" value="Unassembled WGS sequence"/>
</dbReference>
<dbReference type="GO" id="GO:0005759">
    <property type="term" value="C:mitochondrial matrix"/>
    <property type="evidence" value="ECO:0007669"/>
    <property type="project" value="UniProtKB-SubCell"/>
</dbReference>
<dbReference type="GO" id="GO:0046872">
    <property type="term" value="F:metal ion binding"/>
    <property type="evidence" value="ECO:0007669"/>
    <property type="project" value="UniProtKB-KW"/>
</dbReference>
<dbReference type="GO" id="GO:0004222">
    <property type="term" value="F:metalloendopeptidase activity"/>
    <property type="evidence" value="ECO:0007669"/>
    <property type="project" value="UniProtKB-EC"/>
</dbReference>
<dbReference type="GO" id="GO:0006518">
    <property type="term" value="P:peptide metabolic process"/>
    <property type="evidence" value="ECO:0007669"/>
    <property type="project" value="TreeGrafter"/>
</dbReference>
<dbReference type="GO" id="GO:0006627">
    <property type="term" value="P:protein processing involved in protein targeting to mitochondrion"/>
    <property type="evidence" value="ECO:0007669"/>
    <property type="project" value="TreeGrafter"/>
</dbReference>
<dbReference type="CDD" id="cd06457">
    <property type="entry name" value="M3A_MIP"/>
    <property type="match status" value="1"/>
</dbReference>
<dbReference type="FunFam" id="3.40.390.10:FF:000055">
    <property type="entry name" value="Related to mitochondrial intermediate peptidase"/>
    <property type="match status" value="1"/>
</dbReference>
<dbReference type="Gene3D" id="3.40.390.10">
    <property type="entry name" value="Collagenase (Catalytic Domain)"/>
    <property type="match status" value="1"/>
</dbReference>
<dbReference type="Gene3D" id="1.10.1370.10">
    <property type="entry name" value="Neurolysin, domain 3"/>
    <property type="match status" value="2"/>
</dbReference>
<dbReference type="InterPro" id="IPR033851">
    <property type="entry name" value="M3A_MIP"/>
</dbReference>
<dbReference type="InterPro" id="IPR024079">
    <property type="entry name" value="MetalloPept_cat_dom_sf"/>
</dbReference>
<dbReference type="InterPro" id="IPR024077">
    <property type="entry name" value="Neurolysin/TOP_dom2"/>
</dbReference>
<dbReference type="InterPro" id="IPR045090">
    <property type="entry name" value="Pept_M3A_M3B"/>
</dbReference>
<dbReference type="InterPro" id="IPR001567">
    <property type="entry name" value="Pept_M3A_M3B_dom"/>
</dbReference>
<dbReference type="PANTHER" id="PTHR11804:SF79">
    <property type="entry name" value="MITOCHONDRIAL INTERMEDIATE PEPTIDASE"/>
    <property type="match status" value="1"/>
</dbReference>
<dbReference type="PANTHER" id="PTHR11804">
    <property type="entry name" value="PROTEASE M3 THIMET OLIGOPEPTIDASE-RELATED"/>
    <property type="match status" value="1"/>
</dbReference>
<dbReference type="Pfam" id="PF01432">
    <property type="entry name" value="Peptidase_M3"/>
    <property type="match status" value="1"/>
</dbReference>
<dbReference type="SUPFAM" id="SSF55486">
    <property type="entry name" value="Metalloproteases ('zincins'), catalytic domain"/>
    <property type="match status" value="1"/>
</dbReference>
<dbReference type="PROSITE" id="PS00142">
    <property type="entry name" value="ZINC_PROTEASE"/>
    <property type="match status" value="1"/>
</dbReference>
<name>PMIP_COPC7</name>
<sequence length="776" mass="87377">MLNSARTVLARHSARQLYRFRGCLVHQQRHRHQVQRTLATHVQRHLPASLDDKALVALFDQPNGSKLRSPFNTTGLFGHPNLTHPRALVSLAESTLVRAQLLTQRILEAGKSEHELAKVVKNLDRLSDMLCGVIDLAELVRNAHPDRLWVEAANHAYETLCEFMNVLNTHTGLYEVLKQVLSNPTLVNSLSPEAYQTALIFWRDFEKSAIDLPPAQRNKFVSLSSDILVLGRQFLENASTPRPPTSIKASDLAGLKDKGMGVRLQLQAQFTNRDLQIYPGSLQAHMIMRSAPNEEPRRRLYLAANSSTQEQIEVLEALLKKRAELAQLVGRESFAHMTLDDKMAKTPDNVTNFLDALIDHTRPFARSALRTLAQRKQAHHGLSSLPIIQAWDRDFYCPPDPPAPPIPLPPLTLGTVFMGLSRLFRHLYGVSLRPVPSASGEVWHTDVQKLEVVDEDQGIIGWIYADLFARRGKASGAAHYTVRCSRRTDDDDEQGDGMFEGAELQILESQEFEAVKRHRLPNQEGVFQLPLVVLLCEFTRPTVSKGGTILEWHEVQTLFHEMGHAMHSMLGRTEYQNVSGTRCATDFVELPSILMEHFLNSPAVLSLFDADGTSTLRQIGNHHHDPCHAIDTYSQIMLAVVDQIYHSPTVLDPSFDSTREYGNLQNTRGLIPYVPGTSYQTQFGHLFGYGATYYSYLFDRAIASRVWSKVFSKDPLDRELGEKYKREVLRWGGARDPWEMVATLLDAPELAAGDAEAMREVGRWRIEDEVGVGGRH</sequence>
<accession>A8N2T3</accession>
<evidence type="ECO:0000250" key="1"/>
<evidence type="ECO:0000255" key="2"/>
<evidence type="ECO:0000255" key="3">
    <source>
        <dbReference type="PROSITE-ProRule" id="PRU10095"/>
    </source>
</evidence>
<evidence type="ECO:0000305" key="4"/>
<organism>
    <name type="scientific">Coprinopsis cinerea (strain Okayama-7 / 130 / ATCC MYA-4618 / FGSC 9003)</name>
    <name type="common">Inky cap fungus</name>
    <name type="synonym">Hormographiella aspergillata</name>
    <dbReference type="NCBI Taxonomy" id="240176"/>
    <lineage>
        <taxon>Eukaryota</taxon>
        <taxon>Fungi</taxon>
        <taxon>Dikarya</taxon>
        <taxon>Basidiomycota</taxon>
        <taxon>Agaricomycotina</taxon>
        <taxon>Agaricomycetes</taxon>
        <taxon>Agaricomycetidae</taxon>
        <taxon>Agaricales</taxon>
        <taxon>Agaricineae</taxon>
        <taxon>Psathyrellaceae</taxon>
        <taxon>Coprinopsis</taxon>
    </lineage>
</organism>
<protein>
    <recommendedName>
        <fullName>Mitochondrial intermediate peptidase</fullName>
        <shortName>MIP</shortName>
        <ecNumber>3.4.24.59</ecNumber>
    </recommendedName>
    <alternativeName>
        <fullName>Octapeptidyl aminopeptidase</fullName>
    </alternativeName>
</protein>
<keyword id="KW-0378">Hydrolase</keyword>
<keyword id="KW-0479">Metal-binding</keyword>
<keyword id="KW-0482">Metalloprotease</keyword>
<keyword id="KW-0496">Mitochondrion</keyword>
<keyword id="KW-0645">Protease</keyword>
<keyword id="KW-1185">Reference proteome</keyword>
<keyword id="KW-0809">Transit peptide</keyword>
<keyword id="KW-0862">Zinc</keyword>
<comment type="function">
    <text evidence="1">Cleaves proteins, imported into the mitochondrion, to their mature size. While most mitochondrial precursor proteins are processed to the mature form in one step by mitochondrial processing peptidase (MPP), the sequential cleavage by MIP of an octapeptide after initial processing by MPP is a required step for a subgroup of nuclear-encoded precursor proteins destined for the matrix or the inner membrane (By similarity).</text>
</comment>
<comment type="catalytic activity">
    <reaction>
        <text>Release of an N-terminal octapeptide as second stage of processing of some proteins imported into the mitochondrion.</text>
        <dbReference type="EC" id="3.4.24.59"/>
    </reaction>
</comment>
<comment type="cofactor">
    <cofactor evidence="1">
        <name>Zn(2+)</name>
        <dbReference type="ChEBI" id="CHEBI:29105"/>
    </cofactor>
    <text evidence="1">Binds 1 zinc ion.</text>
</comment>
<comment type="subcellular location">
    <subcellularLocation>
        <location evidence="1">Mitochondrion matrix</location>
    </subcellularLocation>
</comment>
<comment type="similarity">
    <text evidence="4">Belongs to the peptidase M3 family.</text>
</comment>